<proteinExistence type="inferred from homology"/>
<accession>Q04SB0</accession>
<protein>
    <recommendedName>
        <fullName evidence="1">Cysteine--tRNA ligase</fullName>
        <ecNumber evidence="1">6.1.1.16</ecNumber>
    </recommendedName>
    <alternativeName>
        <fullName evidence="1">Cysteinyl-tRNA synthetase</fullName>
        <shortName evidence="1">CysRS</shortName>
    </alternativeName>
</protein>
<keyword id="KW-0030">Aminoacyl-tRNA synthetase</keyword>
<keyword id="KW-0067">ATP-binding</keyword>
<keyword id="KW-0963">Cytoplasm</keyword>
<keyword id="KW-0436">Ligase</keyword>
<keyword id="KW-0479">Metal-binding</keyword>
<keyword id="KW-0547">Nucleotide-binding</keyword>
<keyword id="KW-0648">Protein biosynthesis</keyword>
<keyword id="KW-0862">Zinc</keyword>
<name>SYC_LEPBJ</name>
<dbReference type="EC" id="6.1.1.16" evidence="1"/>
<dbReference type="EMBL" id="CP000350">
    <property type="protein sequence ID" value="ABJ76210.1"/>
    <property type="molecule type" value="Genomic_DNA"/>
</dbReference>
<dbReference type="RefSeq" id="WP_011670407.1">
    <property type="nucleotide sequence ID" value="NC_008510.1"/>
</dbReference>
<dbReference type="SMR" id="Q04SB0"/>
<dbReference type="KEGG" id="lbj:LBJ_1653"/>
<dbReference type="HOGENOM" id="CLU_013528_0_1_12"/>
<dbReference type="Proteomes" id="UP000000656">
    <property type="component" value="Chromosome 1"/>
</dbReference>
<dbReference type="GO" id="GO:0005829">
    <property type="term" value="C:cytosol"/>
    <property type="evidence" value="ECO:0007669"/>
    <property type="project" value="TreeGrafter"/>
</dbReference>
<dbReference type="GO" id="GO:0005524">
    <property type="term" value="F:ATP binding"/>
    <property type="evidence" value="ECO:0007669"/>
    <property type="project" value="UniProtKB-UniRule"/>
</dbReference>
<dbReference type="GO" id="GO:0004817">
    <property type="term" value="F:cysteine-tRNA ligase activity"/>
    <property type="evidence" value="ECO:0007669"/>
    <property type="project" value="UniProtKB-UniRule"/>
</dbReference>
<dbReference type="GO" id="GO:0008270">
    <property type="term" value="F:zinc ion binding"/>
    <property type="evidence" value="ECO:0007669"/>
    <property type="project" value="UniProtKB-UniRule"/>
</dbReference>
<dbReference type="GO" id="GO:0006423">
    <property type="term" value="P:cysteinyl-tRNA aminoacylation"/>
    <property type="evidence" value="ECO:0007669"/>
    <property type="project" value="UniProtKB-UniRule"/>
</dbReference>
<dbReference type="CDD" id="cd00672">
    <property type="entry name" value="CysRS_core"/>
    <property type="match status" value="1"/>
</dbReference>
<dbReference type="FunFam" id="3.40.50.620:FF:000130">
    <property type="entry name" value="Cysteine--tRNA ligase"/>
    <property type="match status" value="1"/>
</dbReference>
<dbReference type="Gene3D" id="1.20.120.1910">
    <property type="entry name" value="Cysteine-tRNA ligase, C-terminal anti-codon recognition domain"/>
    <property type="match status" value="1"/>
</dbReference>
<dbReference type="Gene3D" id="3.40.50.620">
    <property type="entry name" value="HUPs"/>
    <property type="match status" value="1"/>
</dbReference>
<dbReference type="HAMAP" id="MF_00041">
    <property type="entry name" value="Cys_tRNA_synth"/>
    <property type="match status" value="1"/>
</dbReference>
<dbReference type="InterPro" id="IPR015803">
    <property type="entry name" value="Cys-tRNA-ligase"/>
</dbReference>
<dbReference type="InterPro" id="IPR015273">
    <property type="entry name" value="Cys-tRNA-synt_Ia_DALR"/>
</dbReference>
<dbReference type="InterPro" id="IPR024909">
    <property type="entry name" value="Cys-tRNA/MSH_ligase"/>
</dbReference>
<dbReference type="InterPro" id="IPR056411">
    <property type="entry name" value="CysS_C"/>
</dbReference>
<dbReference type="InterPro" id="IPR014729">
    <property type="entry name" value="Rossmann-like_a/b/a_fold"/>
</dbReference>
<dbReference type="InterPro" id="IPR032678">
    <property type="entry name" value="tRNA-synt_1_cat_dom"/>
</dbReference>
<dbReference type="InterPro" id="IPR009080">
    <property type="entry name" value="tRNAsynth_Ia_anticodon-bd"/>
</dbReference>
<dbReference type="NCBIfam" id="TIGR00435">
    <property type="entry name" value="cysS"/>
    <property type="match status" value="1"/>
</dbReference>
<dbReference type="PANTHER" id="PTHR10890:SF3">
    <property type="entry name" value="CYSTEINE--TRNA LIGASE, CYTOPLASMIC"/>
    <property type="match status" value="1"/>
</dbReference>
<dbReference type="PANTHER" id="PTHR10890">
    <property type="entry name" value="CYSTEINYL-TRNA SYNTHETASE"/>
    <property type="match status" value="1"/>
</dbReference>
<dbReference type="Pfam" id="PF23493">
    <property type="entry name" value="CysS_C"/>
    <property type="match status" value="1"/>
</dbReference>
<dbReference type="Pfam" id="PF09190">
    <property type="entry name" value="DALR_2"/>
    <property type="match status" value="1"/>
</dbReference>
<dbReference type="Pfam" id="PF01406">
    <property type="entry name" value="tRNA-synt_1e"/>
    <property type="match status" value="1"/>
</dbReference>
<dbReference type="PRINTS" id="PR00983">
    <property type="entry name" value="TRNASYNTHCYS"/>
</dbReference>
<dbReference type="SMART" id="SM00840">
    <property type="entry name" value="DALR_2"/>
    <property type="match status" value="1"/>
</dbReference>
<dbReference type="SUPFAM" id="SSF47323">
    <property type="entry name" value="Anticodon-binding domain of a subclass of class I aminoacyl-tRNA synthetases"/>
    <property type="match status" value="1"/>
</dbReference>
<dbReference type="SUPFAM" id="SSF52374">
    <property type="entry name" value="Nucleotidylyl transferase"/>
    <property type="match status" value="1"/>
</dbReference>
<evidence type="ECO:0000255" key="1">
    <source>
        <dbReference type="HAMAP-Rule" id="MF_00041"/>
    </source>
</evidence>
<reference key="1">
    <citation type="journal article" date="2006" name="Proc. Natl. Acad. Sci. U.S.A.">
        <title>Genome reduction in Leptospira borgpetersenii reflects limited transmission potential.</title>
        <authorList>
            <person name="Bulach D.M."/>
            <person name="Zuerner R.L."/>
            <person name="Wilson P."/>
            <person name="Seemann T."/>
            <person name="McGrath A."/>
            <person name="Cullen P.A."/>
            <person name="Davis J."/>
            <person name="Johnson M."/>
            <person name="Kuczek E."/>
            <person name="Alt D.P."/>
            <person name="Peterson-Burch B."/>
            <person name="Coppel R.L."/>
            <person name="Rood J.I."/>
            <person name="Davies J.K."/>
            <person name="Adler B."/>
        </authorList>
    </citation>
    <scope>NUCLEOTIDE SEQUENCE [LARGE SCALE GENOMIC DNA]</scope>
    <source>
        <strain>JB197</strain>
    </source>
</reference>
<comment type="catalytic activity">
    <reaction evidence="1">
        <text>tRNA(Cys) + L-cysteine + ATP = L-cysteinyl-tRNA(Cys) + AMP + diphosphate</text>
        <dbReference type="Rhea" id="RHEA:17773"/>
        <dbReference type="Rhea" id="RHEA-COMP:9661"/>
        <dbReference type="Rhea" id="RHEA-COMP:9679"/>
        <dbReference type="ChEBI" id="CHEBI:30616"/>
        <dbReference type="ChEBI" id="CHEBI:33019"/>
        <dbReference type="ChEBI" id="CHEBI:35235"/>
        <dbReference type="ChEBI" id="CHEBI:78442"/>
        <dbReference type="ChEBI" id="CHEBI:78517"/>
        <dbReference type="ChEBI" id="CHEBI:456215"/>
        <dbReference type="EC" id="6.1.1.16"/>
    </reaction>
</comment>
<comment type="cofactor">
    <cofactor evidence="1">
        <name>Zn(2+)</name>
        <dbReference type="ChEBI" id="CHEBI:29105"/>
    </cofactor>
    <text evidence="1">Binds 1 zinc ion per subunit.</text>
</comment>
<comment type="subunit">
    <text evidence="1">Monomer.</text>
</comment>
<comment type="subcellular location">
    <subcellularLocation>
        <location evidence="1">Cytoplasm</location>
    </subcellularLocation>
</comment>
<comment type="similarity">
    <text evidence="1">Belongs to the class-I aminoacyl-tRNA synthetase family.</text>
</comment>
<organism>
    <name type="scientific">Leptospira borgpetersenii serovar Hardjo-bovis (strain JB197)</name>
    <dbReference type="NCBI Taxonomy" id="355277"/>
    <lineage>
        <taxon>Bacteria</taxon>
        <taxon>Pseudomonadati</taxon>
        <taxon>Spirochaetota</taxon>
        <taxon>Spirochaetia</taxon>
        <taxon>Leptospirales</taxon>
        <taxon>Leptospiraceae</taxon>
        <taxon>Leptospira</taxon>
    </lineage>
</organism>
<sequence>MIEIQFYNSLSGKKEKFSPANPHRVTVYSCGPTVYNFAHIGNLRAFLFVDVLRRSLKLLGYGVDMTMNITDIDDKIIRDSIASQKSIQEFTTPWTEAFFEDLKTVSAEFLEHYPKATESIPEMIQIIQRLQNQGLVYEKDENLYFSIQKFEGYGKLSKIDTSGMKTGTRYDTDEYDKEDVRDFVLWKSPKRKGEASWKTSVGTGRPGWHLECSAMIRKIYGSGVDIHTGGVDLLFPHHENEIAQSEGAFPEESFVRTWLHSEHLLVEGQKMSKSKGNFYTLRDLVGQGLDPKAIRFLLISAHYRSKLNFSTDRIAEASANIRKIQNCLDRLLDIAQNVKIDPSYSFNDELTLRWKKEFEESLADDLNVSKALAVVFESLKTINAFLDSKKNRVAEISANEFIQILAYYDRIFGVLNFESQKDPLIDSEIDSLIQERQTARKNKDFARSDAIRDQLLAQGILIEDTKDGIRWRRK</sequence>
<feature type="chain" id="PRO_0000332844" description="Cysteine--tRNA ligase">
    <location>
        <begin position="1"/>
        <end position="474"/>
    </location>
</feature>
<feature type="short sequence motif" description="'HIGH' region">
    <location>
        <begin position="32"/>
        <end position="42"/>
    </location>
</feature>
<feature type="short sequence motif" description="'KMSKS' region">
    <location>
        <begin position="270"/>
        <end position="274"/>
    </location>
</feature>
<feature type="binding site" evidence="1">
    <location>
        <position position="30"/>
    </location>
    <ligand>
        <name>Zn(2+)</name>
        <dbReference type="ChEBI" id="CHEBI:29105"/>
    </ligand>
</feature>
<feature type="binding site" evidence="1">
    <location>
        <position position="212"/>
    </location>
    <ligand>
        <name>Zn(2+)</name>
        <dbReference type="ChEBI" id="CHEBI:29105"/>
    </ligand>
</feature>
<feature type="binding site" evidence="1">
    <location>
        <position position="237"/>
    </location>
    <ligand>
        <name>Zn(2+)</name>
        <dbReference type="ChEBI" id="CHEBI:29105"/>
    </ligand>
</feature>
<feature type="binding site" evidence="1">
    <location>
        <position position="241"/>
    </location>
    <ligand>
        <name>Zn(2+)</name>
        <dbReference type="ChEBI" id="CHEBI:29105"/>
    </ligand>
</feature>
<feature type="binding site" evidence="1">
    <location>
        <position position="273"/>
    </location>
    <ligand>
        <name>ATP</name>
        <dbReference type="ChEBI" id="CHEBI:30616"/>
    </ligand>
</feature>
<gene>
    <name evidence="1" type="primary">cysS</name>
    <name type="ordered locus">LBJ_1653</name>
</gene>